<keyword id="KW-0067">ATP-binding</keyword>
<keyword id="KW-1003">Cell membrane</keyword>
<keyword id="KW-0472">Membrane</keyword>
<keyword id="KW-0547">Nucleotide-binding</keyword>
<keyword id="KW-1185">Reference proteome</keyword>
<keyword id="KW-1278">Translocase</keyword>
<keyword id="KW-0813">Transport</keyword>
<proteinExistence type="inferred from homology"/>
<sequence length="255" mass="28582">MSLSIRVNEKAFGKGSFKTSVLQDVNLTVENGEFLTVIGPSGCGKSTLLKIAAGLDGDYEGRISMNGREIKGPGIQQGFIFQEHRLFPWMTVEQNIAADLSLKEPAVRKKVDELIETVRLKGAEKQYPRELSGGMSQRVAIARALLREPEILLLDEPFGALDAFTRKHLQDVLTDIWREKKMTMILVTHDIDESVYLANRIAILTAKPGRIHKLIPVDLPFPRSRTSPVFQTIRQKVLKEFETTETFSFQEGSGI</sequence>
<feature type="chain" id="PRO_0000279891" description="Aliphatic sulfonates import ATP-binding protein SsuB">
    <location>
        <begin position="1"/>
        <end position="255"/>
    </location>
</feature>
<feature type="domain" description="ABC transporter" evidence="1">
    <location>
        <begin position="5"/>
        <end position="231"/>
    </location>
</feature>
<feature type="binding site" evidence="1">
    <location>
        <begin position="39"/>
        <end position="46"/>
    </location>
    <ligand>
        <name>ATP</name>
        <dbReference type="ChEBI" id="CHEBI:30616"/>
    </ligand>
</feature>
<name>SSUB_BACLD</name>
<organism>
    <name type="scientific">Bacillus licheniformis (strain ATCC 14580 / DSM 13 / JCM 2505 / CCUG 7422 / NBRC 12200 / NCIMB 9375 / NCTC 10341 / NRRL NRS-1264 / Gibson 46)</name>
    <dbReference type="NCBI Taxonomy" id="279010"/>
    <lineage>
        <taxon>Bacteria</taxon>
        <taxon>Bacillati</taxon>
        <taxon>Bacillota</taxon>
        <taxon>Bacilli</taxon>
        <taxon>Bacillales</taxon>
        <taxon>Bacillaceae</taxon>
        <taxon>Bacillus</taxon>
    </lineage>
</organism>
<comment type="function">
    <text evidence="1">Part of the ABC transporter complex SsuABC involved in aliphatic sulfonates import. Responsible for energy coupling to the transport system.</text>
</comment>
<comment type="catalytic activity">
    <reaction evidence="1">
        <text>ATP + H2O + aliphatic sulfonate-[sulfonate-binding protein]Side 1 = ADP + phosphate + aliphatic sulfonateSide 2 + [sulfonate-binding protein]Side 1.</text>
        <dbReference type="EC" id="7.6.2.14"/>
    </reaction>
</comment>
<comment type="subunit">
    <text evidence="1">The complex is composed of two ATP-binding proteins (SsuB), two transmembrane proteins (SsuC) and a solute-binding protein (SsuA).</text>
</comment>
<comment type="subcellular location">
    <subcellularLocation>
        <location evidence="1">Cell membrane</location>
        <topology evidence="1">Peripheral membrane protein</topology>
    </subcellularLocation>
</comment>
<comment type="similarity">
    <text evidence="1">Belongs to the ABC transporter superfamily. Aliphatic sulfonates importer (TC 3.A.1.17.2) family.</text>
</comment>
<accession>Q65M64</accession>
<accession>Q62XK4</accession>
<evidence type="ECO:0000255" key="1">
    <source>
        <dbReference type="HAMAP-Rule" id="MF_01724"/>
    </source>
</evidence>
<protein>
    <recommendedName>
        <fullName evidence="1">Aliphatic sulfonates import ATP-binding protein SsuB</fullName>
        <ecNumber evidence="1">7.6.2.14</ecNumber>
    </recommendedName>
</protein>
<dbReference type="EC" id="7.6.2.14" evidence="1"/>
<dbReference type="EMBL" id="AE017333">
    <property type="protein sequence ID" value="AAU39850.1"/>
    <property type="molecule type" value="Genomic_DNA"/>
</dbReference>
<dbReference type="EMBL" id="CP000002">
    <property type="protein sequence ID" value="AAU22504.1"/>
    <property type="molecule type" value="Genomic_DNA"/>
</dbReference>
<dbReference type="RefSeq" id="WP_009329001.1">
    <property type="nucleotide sequence ID" value="NC_006322.1"/>
</dbReference>
<dbReference type="SMR" id="Q65M64"/>
<dbReference type="STRING" id="279010.BL03206"/>
<dbReference type="KEGG" id="bld:BLi00941"/>
<dbReference type="KEGG" id="bli:BL03206"/>
<dbReference type="eggNOG" id="COG1116">
    <property type="taxonomic scope" value="Bacteria"/>
</dbReference>
<dbReference type="HOGENOM" id="CLU_000604_1_22_9"/>
<dbReference type="Proteomes" id="UP000000606">
    <property type="component" value="Chromosome"/>
</dbReference>
<dbReference type="GO" id="GO:0005886">
    <property type="term" value="C:plasma membrane"/>
    <property type="evidence" value="ECO:0007669"/>
    <property type="project" value="UniProtKB-SubCell"/>
</dbReference>
<dbReference type="GO" id="GO:0005524">
    <property type="term" value="F:ATP binding"/>
    <property type="evidence" value="ECO:0007669"/>
    <property type="project" value="UniProtKB-KW"/>
</dbReference>
<dbReference type="GO" id="GO:0016887">
    <property type="term" value="F:ATP hydrolysis activity"/>
    <property type="evidence" value="ECO:0007669"/>
    <property type="project" value="InterPro"/>
</dbReference>
<dbReference type="CDD" id="cd03293">
    <property type="entry name" value="ABC_NrtD_SsuB_transporters"/>
    <property type="match status" value="1"/>
</dbReference>
<dbReference type="Gene3D" id="3.40.50.300">
    <property type="entry name" value="P-loop containing nucleotide triphosphate hydrolases"/>
    <property type="match status" value="1"/>
</dbReference>
<dbReference type="InterPro" id="IPR003593">
    <property type="entry name" value="AAA+_ATPase"/>
</dbReference>
<dbReference type="InterPro" id="IPR003439">
    <property type="entry name" value="ABC_transporter-like_ATP-bd"/>
</dbReference>
<dbReference type="InterPro" id="IPR017871">
    <property type="entry name" value="ABC_transporter-like_CS"/>
</dbReference>
<dbReference type="InterPro" id="IPR050166">
    <property type="entry name" value="ABC_transporter_ATP-bind"/>
</dbReference>
<dbReference type="InterPro" id="IPR027417">
    <property type="entry name" value="P-loop_NTPase"/>
</dbReference>
<dbReference type="PANTHER" id="PTHR42788:SF13">
    <property type="entry name" value="ALIPHATIC SULFONATES IMPORT ATP-BINDING PROTEIN SSUB"/>
    <property type="match status" value="1"/>
</dbReference>
<dbReference type="PANTHER" id="PTHR42788">
    <property type="entry name" value="TAURINE IMPORT ATP-BINDING PROTEIN-RELATED"/>
    <property type="match status" value="1"/>
</dbReference>
<dbReference type="Pfam" id="PF00005">
    <property type="entry name" value="ABC_tran"/>
    <property type="match status" value="1"/>
</dbReference>
<dbReference type="SMART" id="SM00382">
    <property type="entry name" value="AAA"/>
    <property type="match status" value="1"/>
</dbReference>
<dbReference type="SUPFAM" id="SSF52540">
    <property type="entry name" value="P-loop containing nucleoside triphosphate hydrolases"/>
    <property type="match status" value="1"/>
</dbReference>
<dbReference type="PROSITE" id="PS00211">
    <property type="entry name" value="ABC_TRANSPORTER_1"/>
    <property type="match status" value="1"/>
</dbReference>
<dbReference type="PROSITE" id="PS50893">
    <property type="entry name" value="ABC_TRANSPORTER_2"/>
    <property type="match status" value="1"/>
</dbReference>
<dbReference type="PROSITE" id="PS51291">
    <property type="entry name" value="SSUB"/>
    <property type="match status" value="1"/>
</dbReference>
<reference key="1">
    <citation type="journal article" date="2004" name="J. Mol. Microbiol. Biotechnol.">
        <title>The complete genome sequence of Bacillus licheniformis DSM13, an organism with great industrial potential.</title>
        <authorList>
            <person name="Veith B."/>
            <person name="Herzberg C."/>
            <person name="Steckel S."/>
            <person name="Feesche J."/>
            <person name="Maurer K.H."/>
            <person name="Ehrenreich P."/>
            <person name="Baeumer S."/>
            <person name="Henne A."/>
            <person name="Liesegang H."/>
            <person name="Merkl R."/>
            <person name="Ehrenreich A."/>
            <person name="Gottschalk G."/>
        </authorList>
    </citation>
    <scope>NUCLEOTIDE SEQUENCE [LARGE SCALE GENOMIC DNA]</scope>
    <source>
        <strain>ATCC 14580 / DSM 13 / JCM 2505 / CCUG 7422 / NBRC 12200 / NCIMB 9375 / NCTC 10341 / NRRL NRS-1264 / Gibson 46</strain>
    </source>
</reference>
<reference key="2">
    <citation type="journal article" date="2004" name="Genome Biol.">
        <title>Complete genome sequence of the industrial bacterium Bacillus licheniformis and comparisons with closely related Bacillus species.</title>
        <authorList>
            <person name="Rey M.W."/>
            <person name="Ramaiya P."/>
            <person name="Nelson B.A."/>
            <person name="Brody-Karpin S.D."/>
            <person name="Zaretsky E.J."/>
            <person name="Tang M."/>
            <person name="Lopez de Leon A."/>
            <person name="Xiang H."/>
            <person name="Gusti V."/>
            <person name="Clausen I.G."/>
            <person name="Olsen P.B."/>
            <person name="Rasmussen M.D."/>
            <person name="Andersen J.T."/>
            <person name="Joergensen P.L."/>
            <person name="Larsen T.S."/>
            <person name="Sorokin A."/>
            <person name="Bolotin A."/>
            <person name="Lapidus A."/>
            <person name="Galleron N."/>
            <person name="Ehrlich S.D."/>
            <person name="Berka R.M."/>
        </authorList>
    </citation>
    <scope>NUCLEOTIDE SEQUENCE [LARGE SCALE GENOMIC DNA]</scope>
    <source>
        <strain>ATCC 14580 / DSM 13 / JCM 2505 / CCUG 7422 / NBRC 12200 / NCIMB 9375 / NCTC 10341 / NRRL NRS-1264 / Gibson 46</strain>
    </source>
</reference>
<gene>
    <name evidence="1" type="primary">ssuB</name>
    <name type="ordered locus">BLi00941</name>
    <name type="ordered locus">BL03206</name>
</gene>